<keyword id="KW-0067">ATP-binding</keyword>
<keyword id="KW-0436">Ligase</keyword>
<keyword id="KW-0547">Nucleotide-binding</keyword>
<keyword id="KW-0554">One-carbon metabolism</keyword>
<evidence type="ECO:0000255" key="1">
    <source>
        <dbReference type="HAMAP-Rule" id="MF_01543"/>
    </source>
</evidence>
<protein>
    <recommendedName>
        <fullName evidence="1">Formate--tetrahydrofolate ligase</fullName>
        <ecNumber evidence="1">6.3.4.3</ecNumber>
    </recommendedName>
    <alternativeName>
        <fullName evidence="1">Formyltetrahydrofolate synthetase</fullName>
        <shortName evidence="1">FHS</shortName>
        <shortName evidence="1">FTHFS</shortName>
    </alternativeName>
</protein>
<dbReference type="EC" id="6.3.4.3" evidence="1"/>
<dbReference type="EMBL" id="FM204884">
    <property type="protein sequence ID" value="CAW99351.1"/>
    <property type="molecule type" value="Genomic_DNA"/>
</dbReference>
<dbReference type="SMR" id="C0MFU5"/>
<dbReference type="KEGG" id="seq:SZO_10160"/>
<dbReference type="PATRIC" id="fig|40041.11.peg.1076"/>
<dbReference type="eggNOG" id="COG2759">
    <property type="taxonomic scope" value="Bacteria"/>
</dbReference>
<dbReference type="HOGENOM" id="CLU_003601_3_3_9"/>
<dbReference type="UniPathway" id="UPA00193"/>
<dbReference type="Proteomes" id="UP000001368">
    <property type="component" value="Chromosome"/>
</dbReference>
<dbReference type="GO" id="GO:0005524">
    <property type="term" value="F:ATP binding"/>
    <property type="evidence" value="ECO:0007669"/>
    <property type="project" value="UniProtKB-UniRule"/>
</dbReference>
<dbReference type="GO" id="GO:0004329">
    <property type="term" value="F:formate-tetrahydrofolate ligase activity"/>
    <property type="evidence" value="ECO:0007669"/>
    <property type="project" value="UniProtKB-UniRule"/>
</dbReference>
<dbReference type="GO" id="GO:0035999">
    <property type="term" value="P:tetrahydrofolate interconversion"/>
    <property type="evidence" value="ECO:0007669"/>
    <property type="project" value="UniProtKB-UniRule"/>
</dbReference>
<dbReference type="CDD" id="cd00477">
    <property type="entry name" value="FTHFS"/>
    <property type="match status" value="1"/>
</dbReference>
<dbReference type="FunFam" id="3.30.1510.10:FF:000001">
    <property type="entry name" value="Formate--tetrahydrofolate ligase"/>
    <property type="match status" value="1"/>
</dbReference>
<dbReference type="FunFam" id="3.10.410.10:FF:000001">
    <property type="entry name" value="Putative formate--tetrahydrofolate ligase"/>
    <property type="match status" value="1"/>
</dbReference>
<dbReference type="Gene3D" id="3.30.1510.10">
    <property type="entry name" value="Domain 2, N(10)-formyltetrahydrofolate synthetase"/>
    <property type="match status" value="1"/>
</dbReference>
<dbReference type="Gene3D" id="3.10.410.10">
    <property type="entry name" value="Formyltetrahydrofolate synthetase, domain 3"/>
    <property type="match status" value="1"/>
</dbReference>
<dbReference type="Gene3D" id="3.40.50.300">
    <property type="entry name" value="P-loop containing nucleotide triphosphate hydrolases"/>
    <property type="match status" value="1"/>
</dbReference>
<dbReference type="HAMAP" id="MF_01543">
    <property type="entry name" value="FTHFS"/>
    <property type="match status" value="1"/>
</dbReference>
<dbReference type="InterPro" id="IPR000559">
    <property type="entry name" value="Formate_THF_ligase"/>
</dbReference>
<dbReference type="InterPro" id="IPR020628">
    <property type="entry name" value="Formate_THF_ligase_CS"/>
</dbReference>
<dbReference type="InterPro" id="IPR027417">
    <property type="entry name" value="P-loop_NTPase"/>
</dbReference>
<dbReference type="NCBIfam" id="NF010030">
    <property type="entry name" value="PRK13505.1"/>
    <property type="match status" value="1"/>
</dbReference>
<dbReference type="Pfam" id="PF01268">
    <property type="entry name" value="FTHFS"/>
    <property type="match status" value="1"/>
</dbReference>
<dbReference type="SUPFAM" id="SSF52540">
    <property type="entry name" value="P-loop containing nucleoside triphosphate hydrolases"/>
    <property type="match status" value="1"/>
</dbReference>
<dbReference type="PROSITE" id="PS00721">
    <property type="entry name" value="FTHFS_1"/>
    <property type="match status" value="1"/>
</dbReference>
<dbReference type="PROSITE" id="PS00722">
    <property type="entry name" value="FTHFS_2"/>
    <property type="match status" value="1"/>
</dbReference>
<gene>
    <name evidence="1" type="primary">fhs</name>
    <name type="ordered locus">SZO_10160</name>
</gene>
<sequence>MKSDIEIAQSVPLKPITEIVKKVGIDGDDLELYGNYKAKLSFEKIKSVKGNKPGKLILVTAINPTPAGEGKSTMSIGLADALTKIGKKTMLALREPSLGPVMGIKGGAAGGGYAQVLPMEDINLHFTGDMHAITTAHNALSALIDNHLQQGNELGIDPRRIIWKRVLDLNDRSLRQVIVGLGSPVNGVPREDGFDITVASEVMAILCLATDLKDLKARLANIVIAYRYDKSPVYVRDLKVEGALALILKDAIKPNLVQTIYGTPAFVHGGPFANIAHGCNSVLATSTALRLADYTVTEAGFGADLGAEKFLNIKTPNLPKAPDAVVIVATLRALKMHGGVAKADLTFENTAAVRSGFANLKRHVENIRKFNIPVVVAINEFVTDTKAEIQVLKELCAEIAVPVELASVWAKGADGGIALANAVVSAIAEESAAYKRLYADKDSLEEKLRAIVTEIYGGRAVQFGPKAKNQLKQFAQFGWDQLPVCMAKTQYSFSDDPSLLGAPDQFDITIRELVPKTGAGFIVALTGDVMTMPGLPKTPAAMKMDVTEDGTAVGLF</sequence>
<comment type="catalytic activity">
    <reaction evidence="1">
        <text>(6S)-5,6,7,8-tetrahydrofolate + formate + ATP = (6R)-10-formyltetrahydrofolate + ADP + phosphate</text>
        <dbReference type="Rhea" id="RHEA:20221"/>
        <dbReference type="ChEBI" id="CHEBI:15740"/>
        <dbReference type="ChEBI" id="CHEBI:30616"/>
        <dbReference type="ChEBI" id="CHEBI:43474"/>
        <dbReference type="ChEBI" id="CHEBI:57453"/>
        <dbReference type="ChEBI" id="CHEBI:195366"/>
        <dbReference type="ChEBI" id="CHEBI:456216"/>
        <dbReference type="EC" id="6.3.4.3"/>
    </reaction>
</comment>
<comment type="pathway">
    <text evidence="1">One-carbon metabolism; tetrahydrofolate interconversion.</text>
</comment>
<comment type="similarity">
    <text evidence="1">Belongs to the formate--tetrahydrofolate ligase family.</text>
</comment>
<reference key="1">
    <citation type="journal article" date="2009" name="PLoS Pathog.">
        <title>Genomic evidence for the evolution of Streptococcus equi: host restriction, increased virulence, and genetic exchange with human pathogens.</title>
        <authorList>
            <person name="Holden M.T.G."/>
            <person name="Heather Z."/>
            <person name="Paillot R."/>
            <person name="Steward K.F."/>
            <person name="Webb K."/>
            <person name="Ainslie F."/>
            <person name="Jourdan T."/>
            <person name="Bason N.C."/>
            <person name="Holroyd N.E."/>
            <person name="Mungall K."/>
            <person name="Quail M.A."/>
            <person name="Sanders M."/>
            <person name="Simmonds M."/>
            <person name="Willey D."/>
            <person name="Brooks K."/>
            <person name="Aanensen D.M."/>
            <person name="Spratt B.G."/>
            <person name="Jolley K.A."/>
            <person name="Maiden M.C.J."/>
            <person name="Kehoe M."/>
            <person name="Chanter N."/>
            <person name="Bentley S.D."/>
            <person name="Robinson C."/>
            <person name="Maskell D.J."/>
            <person name="Parkhill J."/>
            <person name="Waller A.S."/>
        </authorList>
    </citation>
    <scope>NUCLEOTIDE SEQUENCE [LARGE SCALE GENOMIC DNA]</scope>
    <source>
        <strain>H70</strain>
    </source>
</reference>
<organism>
    <name type="scientific">Streptococcus equi subsp. zooepidemicus (strain H70)</name>
    <dbReference type="NCBI Taxonomy" id="553483"/>
    <lineage>
        <taxon>Bacteria</taxon>
        <taxon>Bacillati</taxon>
        <taxon>Bacillota</taxon>
        <taxon>Bacilli</taxon>
        <taxon>Lactobacillales</taxon>
        <taxon>Streptococcaceae</taxon>
        <taxon>Streptococcus</taxon>
    </lineage>
</organism>
<feature type="chain" id="PRO_1000215439" description="Formate--tetrahydrofolate ligase">
    <location>
        <begin position="1"/>
        <end position="556"/>
    </location>
</feature>
<feature type="binding site" evidence="1">
    <location>
        <begin position="65"/>
        <end position="72"/>
    </location>
    <ligand>
        <name>ATP</name>
        <dbReference type="ChEBI" id="CHEBI:30616"/>
    </ligand>
</feature>
<proteinExistence type="inferred from homology"/>
<accession>C0MFU5</accession>
<name>FTHS_STRS7</name>